<proteinExistence type="inferred from homology"/>
<dbReference type="EC" id="6.3.4.3" evidence="1"/>
<dbReference type="EMBL" id="CP000139">
    <property type="protein sequence ID" value="ABR40654.1"/>
    <property type="molecule type" value="Genomic_DNA"/>
</dbReference>
<dbReference type="RefSeq" id="WP_005846873.1">
    <property type="nucleotide sequence ID" value="NZ_CAXVNH010000042.1"/>
</dbReference>
<dbReference type="SMR" id="A6L4P0"/>
<dbReference type="STRING" id="435590.BVU_3016"/>
<dbReference type="PaxDb" id="435590-BVU_3016"/>
<dbReference type="GeneID" id="5303977"/>
<dbReference type="KEGG" id="bvu:BVU_3016"/>
<dbReference type="eggNOG" id="COG2759">
    <property type="taxonomic scope" value="Bacteria"/>
</dbReference>
<dbReference type="HOGENOM" id="CLU_003601_3_3_10"/>
<dbReference type="BioCyc" id="BVUL435590:G1G59-3138-MONOMER"/>
<dbReference type="UniPathway" id="UPA00193"/>
<dbReference type="Proteomes" id="UP000002861">
    <property type="component" value="Chromosome"/>
</dbReference>
<dbReference type="GO" id="GO:0005524">
    <property type="term" value="F:ATP binding"/>
    <property type="evidence" value="ECO:0007669"/>
    <property type="project" value="UniProtKB-UniRule"/>
</dbReference>
<dbReference type="GO" id="GO:0004329">
    <property type="term" value="F:formate-tetrahydrofolate ligase activity"/>
    <property type="evidence" value="ECO:0007669"/>
    <property type="project" value="UniProtKB-UniRule"/>
</dbReference>
<dbReference type="GO" id="GO:0035999">
    <property type="term" value="P:tetrahydrofolate interconversion"/>
    <property type="evidence" value="ECO:0007669"/>
    <property type="project" value="UniProtKB-UniRule"/>
</dbReference>
<dbReference type="CDD" id="cd00477">
    <property type="entry name" value="FTHFS"/>
    <property type="match status" value="1"/>
</dbReference>
<dbReference type="FunFam" id="3.30.1510.10:FF:000001">
    <property type="entry name" value="Formate--tetrahydrofolate ligase"/>
    <property type="match status" value="1"/>
</dbReference>
<dbReference type="Gene3D" id="3.30.1510.10">
    <property type="entry name" value="Domain 2, N(10)-formyltetrahydrofolate synthetase"/>
    <property type="match status" value="1"/>
</dbReference>
<dbReference type="Gene3D" id="3.10.410.10">
    <property type="entry name" value="Formyltetrahydrofolate synthetase, domain 3"/>
    <property type="match status" value="1"/>
</dbReference>
<dbReference type="Gene3D" id="3.40.50.300">
    <property type="entry name" value="P-loop containing nucleotide triphosphate hydrolases"/>
    <property type="match status" value="1"/>
</dbReference>
<dbReference type="HAMAP" id="MF_01543">
    <property type="entry name" value="FTHFS"/>
    <property type="match status" value="1"/>
</dbReference>
<dbReference type="InterPro" id="IPR000559">
    <property type="entry name" value="Formate_THF_ligase"/>
</dbReference>
<dbReference type="InterPro" id="IPR020628">
    <property type="entry name" value="Formate_THF_ligase_CS"/>
</dbReference>
<dbReference type="InterPro" id="IPR027417">
    <property type="entry name" value="P-loop_NTPase"/>
</dbReference>
<dbReference type="NCBIfam" id="NF010030">
    <property type="entry name" value="PRK13505.1"/>
    <property type="match status" value="1"/>
</dbReference>
<dbReference type="Pfam" id="PF01268">
    <property type="entry name" value="FTHFS"/>
    <property type="match status" value="1"/>
</dbReference>
<dbReference type="SUPFAM" id="SSF52540">
    <property type="entry name" value="P-loop containing nucleoside triphosphate hydrolases"/>
    <property type="match status" value="1"/>
</dbReference>
<dbReference type="PROSITE" id="PS00721">
    <property type="entry name" value="FTHFS_1"/>
    <property type="match status" value="1"/>
</dbReference>
<dbReference type="PROSITE" id="PS00722">
    <property type="entry name" value="FTHFS_2"/>
    <property type="match status" value="1"/>
</dbReference>
<name>FTHS_PHOV8</name>
<protein>
    <recommendedName>
        <fullName evidence="1">Formate--tetrahydrofolate ligase</fullName>
        <ecNumber evidence="1">6.3.4.3</ecNumber>
    </recommendedName>
    <alternativeName>
        <fullName evidence="1">Formyltetrahydrofolate synthetase</fullName>
        <shortName evidence="1">FHS</shortName>
        <shortName evidence="1">FTHFS</shortName>
    </alternativeName>
</protein>
<gene>
    <name evidence="1" type="primary">fhs</name>
    <name type="ordered locus">BVU_3016</name>
</gene>
<evidence type="ECO:0000255" key="1">
    <source>
        <dbReference type="HAMAP-Rule" id="MF_01543"/>
    </source>
</evidence>
<comment type="catalytic activity">
    <reaction evidence="1">
        <text>(6S)-5,6,7,8-tetrahydrofolate + formate + ATP = (6R)-10-formyltetrahydrofolate + ADP + phosphate</text>
        <dbReference type="Rhea" id="RHEA:20221"/>
        <dbReference type="ChEBI" id="CHEBI:15740"/>
        <dbReference type="ChEBI" id="CHEBI:30616"/>
        <dbReference type="ChEBI" id="CHEBI:43474"/>
        <dbReference type="ChEBI" id="CHEBI:57453"/>
        <dbReference type="ChEBI" id="CHEBI:195366"/>
        <dbReference type="ChEBI" id="CHEBI:456216"/>
        <dbReference type="EC" id="6.3.4.3"/>
    </reaction>
</comment>
<comment type="pathway">
    <text evidence="1">One-carbon metabolism; tetrahydrofolate interconversion.</text>
</comment>
<comment type="similarity">
    <text evidence="1">Belongs to the formate--tetrahydrofolate ligase family.</text>
</comment>
<accession>A6L4P0</accession>
<feature type="chain" id="PRO_0000300516" description="Formate--tetrahydrofolate ligase">
    <location>
        <begin position="1"/>
        <end position="555"/>
    </location>
</feature>
<feature type="binding site" evidence="1">
    <location>
        <begin position="64"/>
        <end position="71"/>
    </location>
    <ligand>
        <name>ATP</name>
        <dbReference type="ChEBI" id="CHEBI:30616"/>
    </ligand>
</feature>
<keyword id="KW-0067">ATP-binding</keyword>
<keyword id="KW-0436">Ligase</keyword>
<keyword id="KW-0547">Nucleotide-binding</keyword>
<keyword id="KW-0554">One-carbon metabolism</keyword>
<reference key="1">
    <citation type="journal article" date="2007" name="PLoS Biol.">
        <title>Evolution of symbiotic bacteria in the distal human intestine.</title>
        <authorList>
            <person name="Xu J."/>
            <person name="Mahowald M.A."/>
            <person name="Ley R.E."/>
            <person name="Lozupone C.A."/>
            <person name="Hamady M."/>
            <person name="Martens E.C."/>
            <person name="Henrissat B."/>
            <person name="Coutinho P.M."/>
            <person name="Minx P."/>
            <person name="Latreille P."/>
            <person name="Cordum H."/>
            <person name="Van Brunt A."/>
            <person name="Kim K."/>
            <person name="Fulton R.S."/>
            <person name="Fulton L.A."/>
            <person name="Clifton S.W."/>
            <person name="Wilson R.K."/>
            <person name="Knight R.D."/>
            <person name="Gordon J.I."/>
        </authorList>
    </citation>
    <scope>NUCLEOTIDE SEQUENCE [LARGE SCALE GENOMIC DNA]</scope>
    <source>
        <strain>ATCC 8482 / DSM 1447 / JCM 5826 / CCUG 4940 / NBRC 14291 / NCTC 11154</strain>
    </source>
</reference>
<organism>
    <name type="scientific">Phocaeicola vulgatus (strain ATCC 8482 / DSM 1447 / JCM 5826 / CCUG 4940 / NBRC 14291 / NCTC 11154)</name>
    <name type="common">Bacteroides vulgatus</name>
    <dbReference type="NCBI Taxonomy" id="435590"/>
    <lineage>
        <taxon>Bacteria</taxon>
        <taxon>Pseudomonadati</taxon>
        <taxon>Bacteroidota</taxon>
        <taxon>Bacteroidia</taxon>
        <taxon>Bacteroidales</taxon>
        <taxon>Bacteroidaceae</taxon>
        <taxon>Phocaeicola</taxon>
    </lineage>
</organism>
<sequence>MKTDIEIARSIELVKIKQVARETGIPVEHISNYGRYIAKVDESQINEEKVQQSNLILVTAITPTKAGIGKTTVSIGLALGLNKIGKKTIVALREPSLGPCFGMKGGAAGGGYAQVLPMDKINLHFTGDFHAITSAHNMISALLDNYLYQNRDNGFGLKEVLWRRVLDVNDRSLRYIVTGLGPKTNGITQESGFDITPASEIMAILCLAKDEKDLRRRIENILLGFTYDNKPFTVKDLGVAGAITVLLKDALSPNLVQTTEHTAAFVHGGPFANIAHGCNSILATKMAMTFSDYTITEAGFGADLGAEKFYDIKCRKAGVTPKLTVLVVTARALKMHGGVSQDKIKEPNLEALKQGVANMDKHLRNLRYFGQTVVVAFNRYGDDSEEEVDYIRTHCEKKGVGFAVNNAFTDGGEGAVELAELVVKTIEEQPSEPLQYAYDDEDSVETKISKVACNLYGASIITYSAAARKKLKHIVELGYGNFPICIAKTQYSFSTDPKIYGAVDNFEFHVQDIVMNAGAEMLVVIAGEIMRMPGLPKEPQALHIDIVNGEIEGLS</sequence>